<feature type="chain" id="PRO_1000148979" description="1-(5-phosphoribosyl)-5-[(5-phosphoribosylamino)methylideneamino] imidazole-4-carboxamide isomerase">
    <location>
        <begin position="1"/>
        <end position="246"/>
    </location>
</feature>
<feature type="active site" description="Proton acceptor" evidence="1">
    <location>
        <position position="8"/>
    </location>
</feature>
<feature type="active site" description="Proton donor" evidence="1">
    <location>
        <position position="129"/>
    </location>
</feature>
<comment type="catalytic activity">
    <reaction evidence="1">
        <text>1-(5-phospho-beta-D-ribosyl)-5-[(5-phospho-beta-D-ribosylamino)methylideneamino]imidazole-4-carboxamide = 5-[(5-phospho-1-deoxy-D-ribulos-1-ylimino)methylamino]-1-(5-phospho-beta-D-ribosyl)imidazole-4-carboxamide</text>
        <dbReference type="Rhea" id="RHEA:15469"/>
        <dbReference type="ChEBI" id="CHEBI:58435"/>
        <dbReference type="ChEBI" id="CHEBI:58525"/>
        <dbReference type="EC" id="5.3.1.16"/>
    </reaction>
</comment>
<comment type="pathway">
    <text evidence="1">Amino-acid biosynthesis; L-histidine biosynthesis; L-histidine from 5-phospho-alpha-D-ribose 1-diphosphate: step 4/9.</text>
</comment>
<comment type="subcellular location">
    <subcellularLocation>
        <location evidence="1">Cytoplasm</location>
    </subcellularLocation>
</comment>
<comment type="similarity">
    <text evidence="1">Belongs to the HisA/HisF family.</text>
</comment>
<accession>B8EM86</accession>
<organism>
    <name type="scientific">Methylocella silvestris (strain DSM 15510 / CIP 108128 / LMG 27833 / NCIMB 13906 / BL2)</name>
    <dbReference type="NCBI Taxonomy" id="395965"/>
    <lineage>
        <taxon>Bacteria</taxon>
        <taxon>Pseudomonadati</taxon>
        <taxon>Pseudomonadota</taxon>
        <taxon>Alphaproteobacteria</taxon>
        <taxon>Hyphomicrobiales</taxon>
        <taxon>Beijerinckiaceae</taxon>
        <taxon>Methylocella</taxon>
    </lineage>
</organism>
<reference key="1">
    <citation type="journal article" date="2010" name="J. Bacteriol.">
        <title>Complete genome sequence of the aerobic facultative methanotroph Methylocella silvestris BL2.</title>
        <authorList>
            <person name="Chen Y."/>
            <person name="Crombie A."/>
            <person name="Rahman M.T."/>
            <person name="Dedysh S.N."/>
            <person name="Liesack W."/>
            <person name="Stott M.B."/>
            <person name="Alam M."/>
            <person name="Theisen A.R."/>
            <person name="Murrell J.C."/>
            <person name="Dunfield P.F."/>
        </authorList>
    </citation>
    <scope>NUCLEOTIDE SEQUENCE [LARGE SCALE GENOMIC DNA]</scope>
    <source>
        <strain>DSM 15510 / CIP 108128 / LMG 27833 / NCIMB 13906 / BL2</strain>
    </source>
</reference>
<evidence type="ECO:0000255" key="1">
    <source>
        <dbReference type="HAMAP-Rule" id="MF_01014"/>
    </source>
</evidence>
<protein>
    <recommendedName>
        <fullName evidence="1">1-(5-phosphoribosyl)-5-[(5-phosphoribosylamino)methylideneamino] imidazole-4-carboxamide isomerase</fullName>
        <ecNumber evidence="1">5.3.1.16</ecNumber>
    </recommendedName>
    <alternativeName>
        <fullName evidence="1">Phosphoribosylformimino-5-aminoimidazole carboxamide ribotide isomerase</fullName>
    </alternativeName>
</protein>
<name>HIS4_METSB</name>
<proteinExistence type="inferred from homology"/>
<dbReference type="EC" id="5.3.1.16" evidence="1"/>
<dbReference type="EMBL" id="CP001280">
    <property type="protein sequence ID" value="ACK51475.1"/>
    <property type="molecule type" value="Genomic_DNA"/>
</dbReference>
<dbReference type="RefSeq" id="WP_012591544.1">
    <property type="nucleotide sequence ID" value="NC_011666.1"/>
</dbReference>
<dbReference type="SMR" id="B8EM86"/>
<dbReference type="STRING" id="395965.Msil_2551"/>
<dbReference type="KEGG" id="msl:Msil_2551"/>
<dbReference type="eggNOG" id="COG0106">
    <property type="taxonomic scope" value="Bacteria"/>
</dbReference>
<dbReference type="HOGENOM" id="CLU_048577_1_1_5"/>
<dbReference type="OrthoDB" id="9807749at2"/>
<dbReference type="UniPathway" id="UPA00031">
    <property type="reaction ID" value="UER00009"/>
</dbReference>
<dbReference type="Proteomes" id="UP000002257">
    <property type="component" value="Chromosome"/>
</dbReference>
<dbReference type="GO" id="GO:0005737">
    <property type="term" value="C:cytoplasm"/>
    <property type="evidence" value="ECO:0007669"/>
    <property type="project" value="UniProtKB-SubCell"/>
</dbReference>
<dbReference type="GO" id="GO:0003949">
    <property type="term" value="F:1-(5-phosphoribosyl)-5-[(5-phosphoribosylamino)methylideneamino]imidazole-4-carboxamide isomerase activity"/>
    <property type="evidence" value="ECO:0007669"/>
    <property type="project" value="UniProtKB-UniRule"/>
</dbReference>
<dbReference type="GO" id="GO:0000105">
    <property type="term" value="P:L-histidine biosynthetic process"/>
    <property type="evidence" value="ECO:0007669"/>
    <property type="project" value="UniProtKB-UniRule"/>
</dbReference>
<dbReference type="GO" id="GO:0000162">
    <property type="term" value="P:L-tryptophan biosynthetic process"/>
    <property type="evidence" value="ECO:0007669"/>
    <property type="project" value="TreeGrafter"/>
</dbReference>
<dbReference type="CDD" id="cd04732">
    <property type="entry name" value="HisA"/>
    <property type="match status" value="1"/>
</dbReference>
<dbReference type="FunFam" id="3.20.20.70:FF:000009">
    <property type="entry name" value="1-(5-phosphoribosyl)-5-[(5-phosphoribosylamino)methylideneamino] imidazole-4-carboxamide isomerase"/>
    <property type="match status" value="1"/>
</dbReference>
<dbReference type="Gene3D" id="3.20.20.70">
    <property type="entry name" value="Aldolase class I"/>
    <property type="match status" value="1"/>
</dbReference>
<dbReference type="HAMAP" id="MF_01014">
    <property type="entry name" value="HisA"/>
    <property type="match status" value="1"/>
</dbReference>
<dbReference type="InterPro" id="IPR013785">
    <property type="entry name" value="Aldolase_TIM"/>
</dbReference>
<dbReference type="InterPro" id="IPR006062">
    <property type="entry name" value="His_biosynth"/>
</dbReference>
<dbReference type="InterPro" id="IPR006063">
    <property type="entry name" value="HisA_bact_arch"/>
</dbReference>
<dbReference type="InterPro" id="IPR044524">
    <property type="entry name" value="Isoase_HisA-like"/>
</dbReference>
<dbReference type="InterPro" id="IPR023016">
    <property type="entry name" value="Isoase_HisA-like_bact"/>
</dbReference>
<dbReference type="InterPro" id="IPR011060">
    <property type="entry name" value="RibuloseP-bd_barrel"/>
</dbReference>
<dbReference type="NCBIfam" id="TIGR00007">
    <property type="entry name" value="1-(5-phosphoribosyl)-5-[(5-phosphoribosylamino)methylideneamino]imidazole-4-carboxamide isomerase"/>
    <property type="match status" value="1"/>
</dbReference>
<dbReference type="PANTHER" id="PTHR43090">
    <property type="entry name" value="1-(5-PHOSPHORIBOSYL)-5-[(5-PHOSPHORIBOSYLAMINO)METHYLIDENEAMINO] IMIDAZOLE-4-CARBOXAMIDE ISOMERASE"/>
    <property type="match status" value="1"/>
</dbReference>
<dbReference type="PANTHER" id="PTHR43090:SF2">
    <property type="entry name" value="1-(5-PHOSPHORIBOSYL)-5-[(5-PHOSPHORIBOSYLAMINO)METHYLIDENEAMINO] IMIDAZOLE-4-CARBOXAMIDE ISOMERASE"/>
    <property type="match status" value="1"/>
</dbReference>
<dbReference type="Pfam" id="PF00977">
    <property type="entry name" value="His_biosynth"/>
    <property type="match status" value="1"/>
</dbReference>
<dbReference type="SUPFAM" id="SSF51366">
    <property type="entry name" value="Ribulose-phoshate binding barrel"/>
    <property type="match status" value="1"/>
</dbReference>
<sequence length="246" mass="25808">MILFPAIDLKGGRCVRLVQGDMAQATVFGDDPAAQAERFERQGFSYLHMVDLDGAFAGKPQNAAAVEAVLARVKIPVQLGGGVRNLATVEAWLEKGVSRIIIGTAALRDPEFTRKAARLHPGKIAVGIDARDGRVAVEGWAETSDITAEELGRRFEDAGVAAIIYTDISRDGLLTGLNIEGTLALAGALKIPVIASGGLASLADVERLLQPDCAKLEGAITGRALYDGRLDPAAALELIARAKTAA</sequence>
<keyword id="KW-0028">Amino-acid biosynthesis</keyword>
<keyword id="KW-0963">Cytoplasm</keyword>
<keyword id="KW-0368">Histidine biosynthesis</keyword>
<keyword id="KW-0413">Isomerase</keyword>
<keyword id="KW-1185">Reference proteome</keyword>
<gene>
    <name evidence="1" type="primary">hisA</name>
    <name type="ordered locus">Msil_2551</name>
</gene>